<name>PYRE_SULDN</name>
<dbReference type="EC" id="2.4.2.10" evidence="1"/>
<dbReference type="EMBL" id="CP000153">
    <property type="protein sequence ID" value="ABB45342.1"/>
    <property type="molecule type" value="Genomic_DNA"/>
</dbReference>
<dbReference type="RefSeq" id="WP_011373682.1">
    <property type="nucleotide sequence ID" value="NC_007575.1"/>
</dbReference>
<dbReference type="SMR" id="Q30NT9"/>
<dbReference type="STRING" id="326298.Suden_2068"/>
<dbReference type="KEGG" id="tdn:Suden_2068"/>
<dbReference type="eggNOG" id="COG0461">
    <property type="taxonomic scope" value="Bacteria"/>
</dbReference>
<dbReference type="HOGENOM" id="CLU_074878_3_0_7"/>
<dbReference type="OrthoDB" id="9783570at2"/>
<dbReference type="UniPathway" id="UPA00070">
    <property type="reaction ID" value="UER00119"/>
</dbReference>
<dbReference type="Proteomes" id="UP000002714">
    <property type="component" value="Chromosome"/>
</dbReference>
<dbReference type="GO" id="GO:0000287">
    <property type="term" value="F:magnesium ion binding"/>
    <property type="evidence" value="ECO:0007669"/>
    <property type="project" value="UniProtKB-UniRule"/>
</dbReference>
<dbReference type="GO" id="GO:0004588">
    <property type="term" value="F:orotate phosphoribosyltransferase activity"/>
    <property type="evidence" value="ECO:0007669"/>
    <property type="project" value="UniProtKB-UniRule"/>
</dbReference>
<dbReference type="GO" id="GO:0044205">
    <property type="term" value="P:'de novo' UMP biosynthetic process"/>
    <property type="evidence" value="ECO:0007669"/>
    <property type="project" value="UniProtKB-UniRule"/>
</dbReference>
<dbReference type="GO" id="GO:0019856">
    <property type="term" value="P:pyrimidine nucleobase biosynthetic process"/>
    <property type="evidence" value="ECO:0007669"/>
    <property type="project" value="InterPro"/>
</dbReference>
<dbReference type="CDD" id="cd06223">
    <property type="entry name" value="PRTases_typeI"/>
    <property type="match status" value="1"/>
</dbReference>
<dbReference type="Gene3D" id="3.40.50.2020">
    <property type="match status" value="1"/>
</dbReference>
<dbReference type="HAMAP" id="MF_01208">
    <property type="entry name" value="PyrE"/>
    <property type="match status" value="1"/>
</dbReference>
<dbReference type="InterPro" id="IPR023031">
    <property type="entry name" value="OPRT"/>
</dbReference>
<dbReference type="InterPro" id="IPR006273">
    <property type="entry name" value="Orotate_PRibTrfase_bac"/>
</dbReference>
<dbReference type="InterPro" id="IPR000836">
    <property type="entry name" value="PRibTrfase_dom"/>
</dbReference>
<dbReference type="InterPro" id="IPR029057">
    <property type="entry name" value="PRTase-like"/>
</dbReference>
<dbReference type="NCBIfam" id="TIGR01367">
    <property type="entry name" value="pyrE_Therm"/>
    <property type="match status" value="1"/>
</dbReference>
<dbReference type="PANTHER" id="PTHR19278">
    <property type="entry name" value="OROTATE PHOSPHORIBOSYLTRANSFERASE"/>
    <property type="match status" value="1"/>
</dbReference>
<dbReference type="PANTHER" id="PTHR19278:SF9">
    <property type="entry name" value="URIDINE 5'-MONOPHOSPHATE SYNTHASE"/>
    <property type="match status" value="1"/>
</dbReference>
<dbReference type="Pfam" id="PF00156">
    <property type="entry name" value="Pribosyltran"/>
    <property type="match status" value="1"/>
</dbReference>
<dbReference type="SUPFAM" id="SSF53271">
    <property type="entry name" value="PRTase-like"/>
    <property type="match status" value="1"/>
</dbReference>
<dbReference type="PROSITE" id="PS00103">
    <property type="entry name" value="PUR_PYR_PR_TRANSFER"/>
    <property type="match status" value="1"/>
</dbReference>
<protein>
    <recommendedName>
        <fullName evidence="1">Orotate phosphoribosyltransferase</fullName>
        <shortName evidence="1">OPRT</shortName>
        <shortName evidence="1">OPRTase</shortName>
        <ecNumber evidence="1">2.4.2.10</ecNumber>
    </recommendedName>
</protein>
<proteinExistence type="inferred from homology"/>
<sequence length="202" mass="21710">MNVKKIYMDADALLEGHFKLSSGNHSQFYLQSAKVLEDPKTAKLLADALALQIKESALEIDTVCAPALGGLIAGFALASALDVRSIFAERVDGVMNLRRGFEIKKGERVLMCEDIITTGGSAMEAAEVVKSLGGEIVGVAALANRGFCKRQNSDVTTKPNCKLPQDIPFFALDDFTFEMYAPEECPMCKSGSEAIKPGSRGN</sequence>
<gene>
    <name evidence="1" type="primary">pyrE</name>
    <name type="ordered locus">Suden_2068</name>
</gene>
<organism>
    <name type="scientific">Sulfurimonas denitrificans (strain ATCC 33889 / DSM 1251)</name>
    <name type="common">Thiomicrospira denitrificans (strain ATCC 33889 / DSM 1251)</name>
    <dbReference type="NCBI Taxonomy" id="326298"/>
    <lineage>
        <taxon>Bacteria</taxon>
        <taxon>Pseudomonadati</taxon>
        <taxon>Campylobacterota</taxon>
        <taxon>Epsilonproteobacteria</taxon>
        <taxon>Campylobacterales</taxon>
        <taxon>Sulfurimonadaceae</taxon>
        <taxon>Sulfurimonas</taxon>
    </lineage>
</organism>
<evidence type="ECO:0000255" key="1">
    <source>
        <dbReference type="HAMAP-Rule" id="MF_01208"/>
    </source>
</evidence>
<feature type="chain" id="PRO_1000085553" description="Orotate phosphoribosyltransferase">
    <location>
        <begin position="1"/>
        <end position="202"/>
    </location>
</feature>
<feature type="binding site" evidence="1">
    <location>
        <begin position="113"/>
        <end position="121"/>
    </location>
    <ligand>
        <name>5-phospho-alpha-D-ribose 1-diphosphate</name>
        <dbReference type="ChEBI" id="CHEBI:58017"/>
    </ligand>
</feature>
<feature type="binding site" evidence="1">
    <location>
        <position position="117"/>
    </location>
    <ligand>
        <name>orotate</name>
        <dbReference type="ChEBI" id="CHEBI:30839"/>
    </ligand>
</feature>
<feature type="binding site" evidence="1">
    <location>
        <position position="145"/>
    </location>
    <ligand>
        <name>orotate</name>
        <dbReference type="ChEBI" id="CHEBI:30839"/>
    </ligand>
</feature>
<comment type="function">
    <text evidence="1">Catalyzes the transfer of a ribosyl phosphate group from 5-phosphoribose 1-diphosphate to orotate, leading to the formation of orotidine monophosphate (OMP).</text>
</comment>
<comment type="catalytic activity">
    <reaction evidence="1">
        <text>orotidine 5'-phosphate + diphosphate = orotate + 5-phospho-alpha-D-ribose 1-diphosphate</text>
        <dbReference type="Rhea" id="RHEA:10380"/>
        <dbReference type="ChEBI" id="CHEBI:30839"/>
        <dbReference type="ChEBI" id="CHEBI:33019"/>
        <dbReference type="ChEBI" id="CHEBI:57538"/>
        <dbReference type="ChEBI" id="CHEBI:58017"/>
        <dbReference type="EC" id="2.4.2.10"/>
    </reaction>
</comment>
<comment type="cofactor">
    <cofactor evidence="1">
        <name>Mg(2+)</name>
        <dbReference type="ChEBI" id="CHEBI:18420"/>
    </cofactor>
</comment>
<comment type="pathway">
    <text evidence="1">Pyrimidine metabolism; UMP biosynthesis via de novo pathway; UMP from orotate: step 1/2.</text>
</comment>
<comment type="subunit">
    <text evidence="1">Homodimer.</text>
</comment>
<comment type="similarity">
    <text evidence="1">Belongs to the purine/pyrimidine phosphoribosyltransferase family. PyrE subfamily.</text>
</comment>
<keyword id="KW-0328">Glycosyltransferase</keyword>
<keyword id="KW-0460">Magnesium</keyword>
<keyword id="KW-0665">Pyrimidine biosynthesis</keyword>
<keyword id="KW-1185">Reference proteome</keyword>
<keyword id="KW-0808">Transferase</keyword>
<accession>Q30NT9</accession>
<reference key="1">
    <citation type="journal article" date="2008" name="Appl. Environ. Microbiol.">
        <title>Genome of the epsilonproteobacterial chemolithoautotroph Sulfurimonas denitrificans.</title>
        <authorList>
            <person name="Sievert S.M."/>
            <person name="Scott K.M."/>
            <person name="Klotz M.G."/>
            <person name="Chain P.S.G."/>
            <person name="Hauser L.J."/>
            <person name="Hemp J."/>
            <person name="Huegler M."/>
            <person name="Land M."/>
            <person name="Lapidus A."/>
            <person name="Larimer F.W."/>
            <person name="Lucas S."/>
            <person name="Malfatti S.A."/>
            <person name="Meyer F."/>
            <person name="Paulsen I.T."/>
            <person name="Ren Q."/>
            <person name="Simon J."/>
            <person name="Bailey K."/>
            <person name="Diaz E."/>
            <person name="Fitzpatrick K.A."/>
            <person name="Glover B."/>
            <person name="Gwatney N."/>
            <person name="Korajkic A."/>
            <person name="Long A."/>
            <person name="Mobberley J.M."/>
            <person name="Pantry S.N."/>
            <person name="Pazder G."/>
            <person name="Peterson S."/>
            <person name="Quintanilla J.D."/>
            <person name="Sprinkle R."/>
            <person name="Stephens J."/>
            <person name="Thomas P."/>
            <person name="Vaughn R."/>
            <person name="Weber M.J."/>
            <person name="Wooten L.L."/>
        </authorList>
    </citation>
    <scope>NUCLEOTIDE SEQUENCE [LARGE SCALE GENOMIC DNA]</scope>
    <source>
        <strain>ATCC 33889 / DSM 1251</strain>
    </source>
</reference>